<reference key="1">
    <citation type="journal article" date="2005" name="Science">
        <title>The transcriptional landscape of the mammalian genome.</title>
        <authorList>
            <person name="Carninci P."/>
            <person name="Kasukawa T."/>
            <person name="Katayama S."/>
            <person name="Gough J."/>
            <person name="Frith M.C."/>
            <person name="Maeda N."/>
            <person name="Oyama R."/>
            <person name="Ravasi T."/>
            <person name="Lenhard B."/>
            <person name="Wells C."/>
            <person name="Kodzius R."/>
            <person name="Shimokawa K."/>
            <person name="Bajic V.B."/>
            <person name="Brenner S.E."/>
            <person name="Batalov S."/>
            <person name="Forrest A.R."/>
            <person name="Zavolan M."/>
            <person name="Davis M.J."/>
            <person name="Wilming L.G."/>
            <person name="Aidinis V."/>
            <person name="Allen J.E."/>
            <person name="Ambesi-Impiombato A."/>
            <person name="Apweiler R."/>
            <person name="Aturaliya R.N."/>
            <person name="Bailey T.L."/>
            <person name="Bansal M."/>
            <person name="Baxter L."/>
            <person name="Beisel K.W."/>
            <person name="Bersano T."/>
            <person name="Bono H."/>
            <person name="Chalk A.M."/>
            <person name="Chiu K.P."/>
            <person name="Choudhary V."/>
            <person name="Christoffels A."/>
            <person name="Clutterbuck D.R."/>
            <person name="Crowe M.L."/>
            <person name="Dalla E."/>
            <person name="Dalrymple B.P."/>
            <person name="de Bono B."/>
            <person name="Della Gatta G."/>
            <person name="di Bernardo D."/>
            <person name="Down T."/>
            <person name="Engstrom P."/>
            <person name="Fagiolini M."/>
            <person name="Faulkner G."/>
            <person name="Fletcher C.F."/>
            <person name="Fukushima T."/>
            <person name="Furuno M."/>
            <person name="Futaki S."/>
            <person name="Gariboldi M."/>
            <person name="Georgii-Hemming P."/>
            <person name="Gingeras T.R."/>
            <person name="Gojobori T."/>
            <person name="Green R.E."/>
            <person name="Gustincich S."/>
            <person name="Harbers M."/>
            <person name="Hayashi Y."/>
            <person name="Hensch T.K."/>
            <person name="Hirokawa N."/>
            <person name="Hill D."/>
            <person name="Huminiecki L."/>
            <person name="Iacono M."/>
            <person name="Ikeo K."/>
            <person name="Iwama A."/>
            <person name="Ishikawa T."/>
            <person name="Jakt M."/>
            <person name="Kanapin A."/>
            <person name="Katoh M."/>
            <person name="Kawasawa Y."/>
            <person name="Kelso J."/>
            <person name="Kitamura H."/>
            <person name="Kitano H."/>
            <person name="Kollias G."/>
            <person name="Krishnan S.P."/>
            <person name="Kruger A."/>
            <person name="Kummerfeld S.K."/>
            <person name="Kurochkin I.V."/>
            <person name="Lareau L.F."/>
            <person name="Lazarevic D."/>
            <person name="Lipovich L."/>
            <person name="Liu J."/>
            <person name="Liuni S."/>
            <person name="McWilliam S."/>
            <person name="Madan Babu M."/>
            <person name="Madera M."/>
            <person name="Marchionni L."/>
            <person name="Matsuda H."/>
            <person name="Matsuzawa S."/>
            <person name="Miki H."/>
            <person name="Mignone F."/>
            <person name="Miyake S."/>
            <person name="Morris K."/>
            <person name="Mottagui-Tabar S."/>
            <person name="Mulder N."/>
            <person name="Nakano N."/>
            <person name="Nakauchi H."/>
            <person name="Ng P."/>
            <person name="Nilsson R."/>
            <person name="Nishiguchi S."/>
            <person name="Nishikawa S."/>
            <person name="Nori F."/>
            <person name="Ohara O."/>
            <person name="Okazaki Y."/>
            <person name="Orlando V."/>
            <person name="Pang K.C."/>
            <person name="Pavan W.J."/>
            <person name="Pavesi G."/>
            <person name="Pesole G."/>
            <person name="Petrovsky N."/>
            <person name="Piazza S."/>
            <person name="Reed J."/>
            <person name="Reid J.F."/>
            <person name="Ring B.Z."/>
            <person name="Ringwald M."/>
            <person name="Rost B."/>
            <person name="Ruan Y."/>
            <person name="Salzberg S.L."/>
            <person name="Sandelin A."/>
            <person name="Schneider C."/>
            <person name="Schoenbach C."/>
            <person name="Sekiguchi K."/>
            <person name="Semple C.A."/>
            <person name="Seno S."/>
            <person name="Sessa L."/>
            <person name="Sheng Y."/>
            <person name="Shibata Y."/>
            <person name="Shimada H."/>
            <person name="Shimada K."/>
            <person name="Silva D."/>
            <person name="Sinclair B."/>
            <person name="Sperling S."/>
            <person name="Stupka E."/>
            <person name="Sugiura K."/>
            <person name="Sultana R."/>
            <person name="Takenaka Y."/>
            <person name="Taki K."/>
            <person name="Tammoja K."/>
            <person name="Tan S.L."/>
            <person name="Tang S."/>
            <person name="Taylor M.S."/>
            <person name="Tegner J."/>
            <person name="Teichmann S.A."/>
            <person name="Ueda H.R."/>
            <person name="van Nimwegen E."/>
            <person name="Verardo R."/>
            <person name="Wei C.L."/>
            <person name="Yagi K."/>
            <person name="Yamanishi H."/>
            <person name="Zabarovsky E."/>
            <person name="Zhu S."/>
            <person name="Zimmer A."/>
            <person name="Hide W."/>
            <person name="Bult C."/>
            <person name="Grimmond S.M."/>
            <person name="Teasdale R.D."/>
            <person name="Liu E.T."/>
            <person name="Brusic V."/>
            <person name="Quackenbush J."/>
            <person name="Wahlestedt C."/>
            <person name="Mattick J.S."/>
            <person name="Hume D.A."/>
            <person name="Kai C."/>
            <person name="Sasaki D."/>
            <person name="Tomaru Y."/>
            <person name="Fukuda S."/>
            <person name="Kanamori-Katayama M."/>
            <person name="Suzuki M."/>
            <person name="Aoki J."/>
            <person name="Arakawa T."/>
            <person name="Iida J."/>
            <person name="Imamura K."/>
            <person name="Itoh M."/>
            <person name="Kato T."/>
            <person name="Kawaji H."/>
            <person name="Kawagashira N."/>
            <person name="Kawashima T."/>
            <person name="Kojima M."/>
            <person name="Kondo S."/>
            <person name="Konno H."/>
            <person name="Nakano K."/>
            <person name="Ninomiya N."/>
            <person name="Nishio T."/>
            <person name="Okada M."/>
            <person name="Plessy C."/>
            <person name="Shibata K."/>
            <person name="Shiraki T."/>
            <person name="Suzuki S."/>
            <person name="Tagami M."/>
            <person name="Waki K."/>
            <person name="Watahiki A."/>
            <person name="Okamura-Oho Y."/>
            <person name="Suzuki H."/>
            <person name="Kawai J."/>
            <person name="Hayashizaki Y."/>
        </authorList>
    </citation>
    <scope>NUCLEOTIDE SEQUENCE [LARGE SCALE MRNA]</scope>
    <source>
        <strain>C57BL/6J</strain>
        <tissue>Testis</tissue>
    </source>
</reference>
<reference key="2">
    <citation type="journal article" date="2004" name="Genome Res.">
        <title>The status, quality, and expansion of the NIH full-length cDNA project: the Mammalian Gene Collection (MGC).</title>
        <authorList>
            <consortium name="The MGC Project Team"/>
        </authorList>
    </citation>
    <scope>NUCLEOTIDE SEQUENCE [LARGE SCALE MRNA]</scope>
    <source>
        <tissue>Mammary gland</tissue>
    </source>
</reference>
<reference key="3">
    <citation type="journal article" date="2010" name="Cell">
        <title>A tissue-specific atlas of mouse protein phosphorylation and expression.</title>
        <authorList>
            <person name="Huttlin E.L."/>
            <person name="Jedrychowski M.P."/>
            <person name="Elias J.E."/>
            <person name="Goswami T."/>
            <person name="Rad R."/>
            <person name="Beausoleil S.A."/>
            <person name="Villen J."/>
            <person name="Haas W."/>
            <person name="Sowa M.E."/>
            <person name="Gygi S.P."/>
        </authorList>
    </citation>
    <scope>IDENTIFICATION BY MASS SPECTROMETRY [LARGE SCALE ANALYSIS]</scope>
    <source>
        <tissue>Brain</tissue>
        <tissue>Brown adipose tissue</tissue>
        <tissue>Heart</tissue>
        <tissue>Kidney</tissue>
        <tissue>Liver</tissue>
        <tissue>Lung</tissue>
        <tissue>Pancreas</tissue>
        <tissue>Spleen</tissue>
        <tissue>Testis</tissue>
    </source>
</reference>
<feature type="chain" id="PRO_0000206153" description="14 kDa phosphohistidine phosphatase">
    <location>
        <begin position="1"/>
        <end position="124"/>
    </location>
</feature>
<feature type="active site" description="Proton acceptor" evidence="2">
    <location>
        <position position="52"/>
    </location>
</feature>
<feature type="binding site" evidence="2">
    <location>
        <position position="20"/>
    </location>
    <ligand>
        <name>substrate</name>
    </ligand>
</feature>
<feature type="binding site" evidence="2">
    <location>
        <begin position="93"/>
        <end position="95"/>
    </location>
    <ligand>
        <name>substrate</name>
    </ligand>
</feature>
<sequence length="124" mass="13997">MAADLGQIPDVDIDSDGVFKYVLIRVHLAEPSGDPAKECKEIVRGYKWAEYHADIYDKVSGELQRNGYDCECLGGGRISHQSQDRKIHVYGYSMGYGRAQHSVSTEKIKAKYPDYEVTWADDGY</sequence>
<protein>
    <recommendedName>
        <fullName>14 kDa phosphohistidine phosphatase</fullName>
        <ecNumber evidence="2">3.9.1.3</ecNumber>
    </recommendedName>
    <alternativeName>
        <fullName>Phosphohistidine phosphatase 1</fullName>
        <shortName>PHPT1</shortName>
    </alternativeName>
    <alternativeName>
        <fullName>Protein histidine phosphatase</fullName>
        <shortName>PHP</shortName>
    </alternativeName>
</protein>
<organism>
    <name type="scientific">Mus musculus</name>
    <name type="common">Mouse</name>
    <dbReference type="NCBI Taxonomy" id="10090"/>
    <lineage>
        <taxon>Eukaryota</taxon>
        <taxon>Metazoa</taxon>
        <taxon>Chordata</taxon>
        <taxon>Craniata</taxon>
        <taxon>Vertebrata</taxon>
        <taxon>Euteleostomi</taxon>
        <taxon>Mammalia</taxon>
        <taxon>Eutheria</taxon>
        <taxon>Euarchontoglires</taxon>
        <taxon>Glires</taxon>
        <taxon>Rodentia</taxon>
        <taxon>Myomorpha</taxon>
        <taxon>Muroidea</taxon>
        <taxon>Muridae</taxon>
        <taxon>Murinae</taxon>
        <taxon>Mus</taxon>
        <taxon>Mus</taxon>
    </lineage>
</organism>
<dbReference type="EC" id="3.9.1.3" evidence="2"/>
<dbReference type="EMBL" id="AK005756">
    <property type="protein sequence ID" value="BAB24222.1"/>
    <property type="molecule type" value="mRNA"/>
</dbReference>
<dbReference type="EMBL" id="BC028657">
    <property type="protein sequence ID" value="AAH28657.1"/>
    <property type="molecule type" value="mRNA"/>
</dbReference>
<dbReference type="CCDS" id="CCDS15781.1"/>
<dbReference type="RefSeq" id="NP_083569.1">
    <property type="nucleotide sequence ID" value="NM_029293.2"/>
</dbReference>
<dbReference type="SMR" id="Q9DAK9"/>
<dbReference type="BioGRID" id="217493">
    <property type="interactions" value="1"/>
</dbReference>
<dbReference type="FunCoup" id="Q9DAK9">
    <property type="interactions" value="2190"/>
</dbReference>
<dbReference type="IntAct" id="Q9DAK9">
    <property type="interactions" value="1"/>
</dbReference>
<dbReference type="MINT" id="Q9DAK9"/>
<dbReference type="STRING" id="10090.ENSMUSP00000037417"/>
<dbReference type="GlyGen" id="Q9DAK9">
    <property type="glycosylation" value="1 site, 1 O-linked glycan (1 site)"/>
</dbReference>
<dbReference type="iPTMnet" id="Q9DAK9"/>
<dbReference type="PhosphoSitePlus" id="Q9DAK9"/>
<dbReference type="SwissPalm" id="Q9DAK9"/>
<dbReference type="REPRODUCTION-2DPAGE" id="IPI00118757"/>
<dbReference type="REPRODUCTION-2DPAGE" id="Q9DAK9"/>
<dbReference type="CPTAC" id="non-CPTAC-3732"/>
<dbReference type="jPOST" id="Q9DAK9"/>
<dbReference type="PaxDb" id="10090-ENSMUSP00000037417"/>
<dbReference type="PeptideAtlas" id="Q9DAK9"/>
<dbReference type="ProteomicsDB" id="289553"/>
<dbReference type="Pumba" id="Q9DAK9"/>
<dbReference type="Antibodypedia" id="18807">
    <property type="antibodies" value="386 antibodies from 32 providers"/>
</dbReference>
<dbReference type="DNASU" id="75454"/>
<dbReference type="Ensembl" id="ENSMUST00000039156.7">
    <property type="protein sequence ID" value="ENSMUSP00000037417.7"/>
    <property type="gene ID" value="ENSMUSG00000036504.7"/>
</dbReference>
<dbReference type="GeneID" id="75454"/>
<dbReference type="KEGG" id="mmu:75454"/>
<dbReference type="UCSC" id="uc008isp.1">
    <property type="organism name" value="mouse"/>
</dbReference>
<dbReference type="AGR" id="MGI:1922704"/>
<dbReference type="CTD" id="29085"/>
<dbReference type="MGI" id="MGI:1922704">
    <property type="gene designation" value="Phpt1"/>
</dbReference>
<dbReference type="VEuPathDB" id="HostDB:ENSMUSG00000036504"/>
<dbReference type="eggNOG" id="ENOG502S4DR">
    <property type="taxonomic scope" value="Eukaryota"/>
</dbReference>
<dbReference type="GeneTree" id="ENSGT00390000002738"/>
<dbReference type="HOGENOM" id="CLU_120717_0_0_1"/>
<dbReference type="InParanoid" id="Q9DAK9"/>
<dbReference type="OMA" id="VRGYSWA"/>
<dbReference type="OrthoDB" id="10249612at2759"/>
<dbReference type="PhylomeDB" id="Q9DAK9"/>
<dbReference type="TreeFam" id="TF315158"/>
<dbReference type="BRENDA" id="3.9.1.3">
    <property type="organism ID" value="3474"/>
</dbReference>
<dbReference type="BioGRID-ORCS" id="75454">
    <property type="hits" value="4 hits in 81 CRISPR screens"/>
</dbReference>
<dbReference type="ChiTaRS" id="Phpt1">
    <property type="organism name" value="mouse"/>
</dbReference>
<dbReference type="PRO" id="PR:Q9DAK9"/>
<dbReference type="Proteomes" id="UP000000589">
    <property type="component" value="Chromosome 2"/>
</dbReference>
<dbReference type="RNAct" id="Q9DAK9">
    <property type="molecule type" value="protein"/>
</dbReference>
<dbReference type="Bgee" id="ENSMUSG00000036504">
    <property type="expression patterns" value="Expressed in lens of camera-type eye and 87 other cell types or tissues"/>
</dbReference>
<dbReference type="GO" id="GO:0005829">
    <property type="term" value="C:cytosol"/>
    <property type="evidence" value="ECO:0000314"/>
    <property type="project" value="BHF-UCL"/>
</dbReference>
<dbReference type="GO" id="GO:0061851">
    <property type="term" value="C:leading edge of lamellipodium"/>
    <property type="evidence" value="ECO:0007669"/>
    <property type="project" value="Ensembl"/>
</dbReference>
<dbReference type="GO" id="GO:0016604">
    <property type="term" value="C:nuclear body"/>
    <property type="evidence" value="ECO:0007669"/>
    <property type="project" value="Ensembl"/>
</dbReference>
<dbReference type="GO" id="GO:0005886">
    <property type="term" value="C:plasma membrane"/>
    <property type="evidence" value="ECO:0007669"/>
    <property type="project" value="Ensembl"/>
</dbReference>
<dbReference type="GO" id="GO:0051015">
    <property type="term" value="F:actin filament binding"/>
    <property type="evidence" value="ECO:0007669"/>
    <property type="project" value="Ensembl"/>
</dbReference>
<dbReference type="GO" id="GO:0019855">
    <property type="term" value="F:calcium channel inhibitor activity"/>
    <property type="evidence" value="ECO:0007669"/>
    <property type="project" value="Ensembl"/>
</dbReference>
<dbReference type="GO" id="GO:0101006">
    <property type="term" value="F:protein histidine phosphatase activity"/>
    <property type="evidence" value="ECO:0007669"/>
    <property type="project" value="UniProtKB-EC"/>
</dbReference>
<dbReference type="GO" id="GO:0044325">
    <property type="term" value="F:transmembrane transporter binding"/>
    <property type="evidence" value="ECO:0007669"/>
    <property type="project" value="Ensembl"/>
</dbReference>
<dbReference type="GO" id="GO:0030036">
    <property type="term" value="P:actin cytoskeleton organization"/>
    <property type="evidence" value="ECO:0007669"/>
    <property type="project" value="Ensembl"/>
</dbReference>
<dbReference type="GO" id="GO:0097581">
    <property type="term" value="P:lamellipodium organization"/>
    <property type="evidence" value="ECO:0007669"/>
    <property type="project" value="Ensembl"/>
</dbReference>
<dbReference type="GO" id="GO:0050860">
    <property type="term" value="P:negative regulation of T cell receptor signaling pathway"/>
    <property type="evidence" value="ECO:0007669"/>
    <property type="project" value="Ensembl"/>
</dbReference>
<dbReference type="GO" id="GO:2000147">
    <property type="term" value="P:positive regulation of cell motility"/>
    <property type="evidence" value="ECO:0000315"/>
    <property type="project" value="BHF-UCL"/>
</dbReference>
<dbReference type="FunFam" id="3.50.20.20:FF:000001">
    <property type="entry name" value="14 kDa phosphohistidine phosphatase"/>
    <property type="match status" value="1"/>
</dbReference>
<dbReference type="Gene3D" id="3.50.20.20">
    <property type="entry name" value="Janus/Ocnus"/>
    <property type="match status" value="1"/>
</dbReference>
<dbReference type="InterPro" id="IPR007702">
    <property type="entry name" value="Janus"/>
</dbReference>
<dbReference type="InterPro" id="IPR038596">
    <property type="entry name" value="Janus_sf"/>
</dbReference>
<dbReference type="PANTHER" id="PTHR12258:SF10">
    <property type="entry name" value="14 KDA PHOSPHOHISTIDINE PHOSPHATASE"/>
    <property type="match status" value="1"/>
</dbReference>
<dbReference type="PANTHER" id="PTHR12258">
    <property type="entry name" value="JANUS-A/JANUS-B"/>
    <property type="match status" value="1"/>
</dbReference>
<dbReference type="Pfam" id="PF05005">
    <property type="entry name" value="Ocnus"/>
    <property type="match status" value="1"/>
</dbReference>
<dbReference type="SUPFAM" id="SSF143724">
    <property type="entry name" value="PHP14-like"/>
    <property type="match status" value="1"/>
</dbReference>
<evidence type="ECO:0000250" key="1"/>
<evidence type="ECO:0000250" key="2">
    <source>
        <dbReference type="UniProtKB" id="Q9NRX4"/>
    </source>
</evidence>
<evidence type="ECO:0000305" key="3"/>
<accession>Q9DAK9</accession>
<gene>
    <name type="primary">Phpt1</name>
    <name type="synonym">Php14</name>
</gene>
<keyword id="KW-0963">Cytoplasm</keyword>
<keyword id="KW-0378">Hydrolase</keyword>
<keyword id="KW-0904">Protein phosphatase</keyword>
<keyword id="KW-1185">Reference proteome</keyword>
<comment type="function">
    <text evidence="2">Exhibits phosphohistidine phosphatase activity.</text>
</comment>
<comment type="catalytic activity">
    <reaction evidence="2">
        <text>N(pros)-phospho-L-histidyl-[protein] + H2O = L-histidyl-[protein] + phosphate</text>
        <dbReference type="Rhea" id="RHEA:47964"/>
        <dbReference type="Rhea" id="RHEA-COMP:9745"/>
        <dbReference type="Rhea" id="RHEA-COMP:9746"/>
        <dbReference type="ChEBI" id="CHEBI:15377"/>
        <dbReference type="ChEBI" id="CHEBI:29979"/>
        <dbReference type="ChEBI" id="CHEBI:43474"/>
        <dbReference type="ChEBI" id="CHEBI:64837"/>
        <dbReference type="EC" id="3.9.1.3"/>
    </reaction>
</comment>
<comment type="catalytic activity">
    <reaction evidence="2">
        <text>N(tele)-phospho-L-histidyl-[protein] + H2O = L-histidyl-[protein] + phosphate</text>
        <dbReference type="Rhea" id="RHEA:47960"/>
        <dbReference type="Rhea" id="RHEA-COMP:9745"/>
        <dbReference type="Rhea" id="RHEA-COMP:10719"/>
        <dbReference type="ChEBI" id="CHEBI:15377"/>
        <dbReference type="ChEBI" id="CHEBI:29979"/>
        <dbReference type="ChEBI" id="CHEBI:43474"/>
        <dbReference type="ChEBI" id="CHEBI:83586"/>
        <dbReference type="EC" id="3.9.1.3"/>
    </reaction>
</comment>
<comment type="subunit">
    <text evidence="2">Monomer.</text>
</comment>
<comment type="subcellular location">
    <subcellularLocation>
        <location evidence="1">Cytoplasm</location>
    </subcellularLocation>
</comment>
<comment type="similarity">
    <text evidence="3">Belongs to the janus family.</text>
</comment>
<proteinExistence type="evidence at protein level"/>
<name>PHP14_MOUSE</name>